<sequence length="303" mass="31774">MTASAPAASASARLLDGRRIAEELLDGLKLRVDARVAAGKARPGLAVVLVGGDPASSVYVRNKRRAAEKVGIEAFDYDLPQGTSEAQLASLIDELNADPKIHGILIQLPLPGIPDANRLIQRIDPRKDVDGFHPQNVGHLALREFGLRPCTPRGIVTLLGHTDQPVRGRNATIVGVSNHVGRPMGLELLIAGCTVTSCHKFTPPDVLEASVRNADILVVAVGRPGLIPGEWVKPGAVVIDVGINRLDDGRLVGDVGFDAAAQRAAWITPVPGGVGPMTVATLMQNTIEAADAAGIQDSGFGIR</sequence>
<comment type="function">
    <text evidence="1">Catalyzes the oxidation of 5,10-methylenetetrahydrofolate to 5,10-methenyltetrahydrofolate and then the hydrolysis of 5,10-methenyltetrahydrofolate to 10-formyltetrahydrofolate.</text>
</comment>
<comment type="catalytic activity">
    <reaction evidence="1">
        <text>(6R)-5,10-methylene-5,6,7,8-tetrahydrofolate + NADP(+) = (6R)-5,10-methenyltetrahydrofolate + NADPH</text>
        <dbReference type="Rhea" id="RHEA:22812"/>
        <dbReference type="ChEBI" id="CHEBI:15636"/>
        <dbReference type="ChEBI" id="CHEBI:57455"/>
        <dbReference type="ChEBI" id="CHEBI:57783"/>
        <dbReference type="ChEBI" id="CHEBI:58349"/>
        <dbReference type="EC" id="1.5.1.5"/>
    </reaction>
</comment>
<comment type="catalytic activity">
    <reaction evidence="1">
        <text>(6R)-5,10-methenyltetrahydrofolate + H2O = (6R)-10-formyltetrahydrofolate + H(+)</text>
        <dbReference type="Rhea" id="RHEA:23700"/>
        <dbReference type="ChEBI" id="CHEBI:15377"/>
        <dbReference type="ChEBI" id="CHEBI:15378"/>
        <dbReference type="ChEBI" id="CHEBI:57455"/>
        <dbReference type="ChEBI" id="CHEBI:195366"/>
        <dbReference type="EC" id="3.5.4.9"/>
    </reaction>
</comment>
<comment type="pathway">
    <text evidence="1">One-carbon metabolism; tetrahydrofolate interconversion.</text>
</comment>
<comment type="subunit">
    <text evidence="1">Homodimer.</text>
</comment>
<comment type="similarity">
    <text evidence="1">Belongs to the tetrahydrofolate dehydrogenase/cyclohydrolase family.</text>
</comment>
<protein>
    <recommendedName>
        <fullName evidence="1">Bifunctional protein FolD</fullName>
    </recommendedName>
    <domain>
        <recommendedName>
            <fullName evidence="1">Methylenetetrahydrofolate dehydrogenase</fullName>
            <ecNumber evidence="1">1.5.1.5</ecNumber>
        </recommendedName>
    </domain>
    <domain>
        <recommendedName>
            <fullName evidence="1">Methenyltetrahydrofolate cyclohydrolase</fullName>
            <ecNumber evidence="1">3.5.4.9</ecNumber>
        </recommendedName>
    </domain>
</protein>
<dbReference type="EC" id="1.5.1.5" evidence="1"/>
<dbReference type="EC" id="3.5.4.9" evidence="1"/>
<dbReference type="EMBL" id="AE008923">
    <property type="protein sequence ID" value="AAM37142.1"/>
    <property type="molecule type" value="Genomic_DNA"/>
</dbReference>
<dbReference type="RefSeq" id="WP_003489637.1">
    <property type="nucleotide sequence ID" value="NC_003919.1"/>
</dbReference>
<dbReference type="SMR" id="Q8PK86"/>
<dbReference type="GeneID" id="66911408"/>
<dbReference type="KEGG" id="xac:XAC2289"/>
<dbReference type="eggNOG" id="COG0190">
    <property type="taxonomic scope" value="Bacteria"/>
</dbReference>
<dbReference type="HOGENOM" id="CLU_034045_2_1_6"/>
<dbReference type="UniPathway" id="UPA00193"/>
<dbReference type="Proteomes" id="UP000000576">
    <property type="component" value="Chromosome"/>
</dbReference>
<dbReference type="GO" id="GO:0005829">
    <property type="term" value="C:cytosol"/>
    <property type="evidence" value="ECO:0007669"/>
    <property type="project" value="TreeGrafter"/>
</dbReference>
<dbReference type="GO" id="GO:0004477">
    <property type="term" value="F:methenyltetrahydrofolate cyclohydrolase activity"/>
    <property type="evidence" value="ECO:0007669"/>
    <property type="project" value="UniProtKB-UniRule"/>
</dbReference>
<dbReference type="GO" id="GO:0004488">
    <property type="term" value="F:methylenetetrahydrofolate dehydrogenase (NADP+) activity"/>
    <property type="evidence" value="ECO:0007669"/>
    <property type="project" value="UniProtKB-UniRule"/>
</dbReference>
<dbReference type="GO" id="GO:0000105">
    <property type="term" value="P:L-histidine biosynthetic process"/>
    <property type="evidence" value="ECO:0007669"/>
    <property type="project" value="UniProtKB-KW"/>
</dbReference>
<dbReference type="GO" id="GO:0009086">
    <property type="term" value="P:methionine biosynthetic process"/>
    <property type="evidence" value="ECO:0007669"/>
    <property type="project" value="UniProtKB-KW"/>
</dbReference>
<dbReference type="GO" id="GO:0006164">
    <property type="term" value="P:purine nucleotide biosynthetic process"/>
    <property type="evidence" value="ECO:0007669"/>
    <property type="project" value="UniProtKB-KW"/>
</dbReference>
<dbReference type="GO" id="GO:0035999">
    <property type="term" value="P:tetrahydrofolate interconversion"/>
    <property type="evidence" value="ECO:0007669"/>
    <property type="project" value="UniProtKB-UniRule"/>
</dbReference>
<dbReference type="CDD" id="cd01080">
    <property type="entry name" value="NAD_bind_m-THF_DH_Cyclohyd"/>
    <property type="match status" value="1"/>
</dbReference>
<dbReference type="FunFam" id="3.40.50.720:FF:000006">
    <property type="entry name" value="Bifunctional protein FolD"/>
    <property type="match status" value="1"/>
</dbReference>
<dbReference type="FunFam" id="3.40.50.10860:FF:000005">
    <property type="entry name" value="C-1-tetrahydrofolate synthase, cytoplasmic, putative"/>
    <property type="match status" value="1"/>
</dbReference>
<dbReference type="Gene3D" id="3.40.50.10860">
    <property type="entry name" value="Leucine Dehydrogenase, chain A, domain 1"/>
    <property type="match status" value="1"/>
</dbReference>
<dbReference type="Gene3D" id="3.40.50.720">
    <property type="entry name" value="NAD(P)-binding Rossmann-like Domain"/>
    <property type="match status" value="1"/>
</dbReference>
<dbReference type="HAMAP" id="MF_01576">
    <property type="entry name" value="THF_DHG_CYH"/>
    <property type="match status" value="1"/>
</dbReference>
<dbReference type="InterPro" id="IPR046346">
    <property type="entry name" value="Aminoacid_DH-like_N_sf"/>
</dbReference>
<dbReference type="InterPro" id="IPR036291">
    <property type="entry name" value="NAD(P)-bd_dom_sf"/>
</dbReference>
<dbReference type="InterPro" id="IPR000672">
    <property type="entry name" value="THF_DH/CycHdrlase"/>
</dbReference>
<dbReference type="InterPro" id="IPR020630">
    <property type="entry name" value="THF_DH/CycHdrlase_cat_dom"/>
</dbReference>
<dbReference type="InterPro" id="IPR020867">
    <property type="entry name" value="THF_DH/CycHdrlase_CS"/>
</dbReference>
<dbReference type="InterPro" id="IPR020631">
    <property type="entry name" value="THF_DH/CycHdrlase_NAD-bd_dom"/>
</dbReference>
<dbReference type="NCBIfam" id="NF008058">
    <property type="entry name" value="PRK10792.1"/>
    <property type="match status" value="1"/>
</dbReference>
<dbReference type="PANTHER" id="PTHR48099:SF5">
    <property type="entry name" value="C-1-TETRAHYDROFOLATE SYNTHASE, CYTOPLASMIC"/>
    <property type="match status" value="1"/>
</dbReference>
<dbReference type="PANTHER" id="PTHR48099">
    <property type="entry name" value="C-1-TETRAHYDROFOLATE SYNTHASE, CYTOPLASMIC-RELATED"/>
    <property type="match status" value="1"/>
</dbReference>
<dbReference type="Pfam" id="PF00763">
    <property type="entry name" value="THF_DHG_CYH"/>
    <property type="match status" value="1"/>
</dbReference>
<dbReference type="Pfam" id="PF02882">
    <property type="entry name" value="THF_DHG_CYH_C"/>
    <property type="match status" value="1"/>
</dbReference>
<dbReference type="PRINTS" id="PR00085">
    <property type="entry name" value="THFDHDRGNASE"/>
</dbReference>
<dbReference type="SUPFAM" id="SSF53223">
    <property type="entry name" value="Aminoacid dehydrogenase-like, N-terminal domain"/>
    <property type="match status" value="1"/>
</dbReference>
<dbReference type="SUPFAM" id="SSF51735">
    <property type="entry name" value="NAD(P)-binding Rossmann-fold domains"/>
    <property type="match status" value="1"/>
</dbReference>
<dbReference type="PROSITE" id="PS00767">
    <property type="entry name" value="THF_DHG_CYH_2"/>
    <property type="match status" value="1"/>
</dbReference>
<organism>
    <name type="scientific">Xanthomonas axonopodis pv. citri (strain 306)</name>
    <dbReference type="NCBI Taxonomy" id="190486"/>
    <lineage>
        <taxon>Bacteria</taxon>
        <taxon>Pseudomonadati</taxon>
        <taxon>Pseudomonadota</taxon>
        <taxon>Gammaproteobacteria</taxon>
        <taxon>Lysobacterales</taxon>
        <taxon>Lysobacteraceae</taxon>
        <taxon>Xanthomonas</taxon>
    </lineage>
</organism>
<feature type="chain" id="PRO_0000268565" description="Bifunctional protein FolD">
    <location>
        <begin position="1"/>
        <end position="303"/>
    </location>
</feature>
<feature type="binding site" evidence="1">
    <location>
        <begin position="175"/>
        <end position="177"/>
    </location>
    <ligand>
        <name>NADP(+)</name>
        <dbReference type="ChEBI" id="CHEBI:58349"/>
    </ligand>
</feature>
<feature type="binding site" evidence="1">
    <location>
        <position position="243"/>
    </location>
    <ligand>
        <name>NADP(+)</name>
        <dbReference type="ChEBI" id="CHEBI:58349"/>
    </ligand>
</feature>
<gene>
    <name evidence="1" type="primary">folD</name>
    <name type="ordered locus">XAC2289</name>
</gene>
<keyword id="KW-0028">Amino-acid biosynthesis</keyword>
<keyword id="KW-0368">Histidine biosynthesis</keyword>
<keyword id="KW-0378">Hydrolase</keyword>
<keyword id="KW-0486">Methionine biosynthesis</keyword>
<keyword id="KW-0511">Multifunctional enzyme</keyword>
<keyword id="KW-0521">NADP</keyword>
<keyword id="KW-0554">One-carbon metabolism</keyword>
<keyword id="KW-0560">Oxidoreductase</keyword>
<keyword id="KW-0658">Purine biosynthesis</keyword>
<proteinExistence type="inferred from homology"/>
<evidence type="ECO:0000255" key="1">
    <source>
        <dbReference type="HAMAP-Rule" id="MF_01576"/>
    </source>
</evidence>
<accession>Q8PK86</accession>
<name>FOLD_XANAC</name>
<reference key="1">
    <citation type="journal article" date="2002" name="Nature">
        <title>Comparison of the genomes of two Xanthomonas pathogens with differing host specificities.</title>
        <authorList>
            <person name="da Silva A.C.R."/>
            <person name="Ferro J.A."/>
            <person name="Reinach F.C."/>
            <person name="Farah C.S."/>
            <person name="Furlan L.R."/>
            <person name="Quaggio R.B."/>
            <person name="Monteiro-Vitorello C.B."/>
            <person name="Van Sluys M.A."/>
            <person name="Almeida N.F. Jr."/>
            <person name="Alves L.M.C."/>
            <person name="do Amaral A.M."/>
            <person name="Bertolini M.C."/>
            <person name="Camargo L.E.A."/>
            <person name="Camarotte G."/>
            <person name="Cannavan F."/>
            <person name="Cardozo J."/>
            <person name="Chambergo F."/>
            <person name="Ciapina L.P."/>
            <person name="Cicarelli R.M.B."/>
            <person name="Coutinho L.L."/>
            <person name="Cursino-Santos J.R."/>
            <person name="El-Dorry H."/>
            <person name="Faria J.B."/>
            <person name="Ferreira A.J.S."/>
            <person name="Ferreira R.C.C."/>
            <person name="Ferro M.I.T."/>
            <person name="Formighieri E.F."/>
            <person name="Franco M.C."/>
            <person name="Greggio C.C."/>
            <person name="Gruber A."/>
            <person name="Katsuyama A.M."/>
            <person name="Kishi L.T."/>
            <person name="Leite R.P."/>
            <person name="Lemos E.G.M."/>
            <person name="Lemos M.V.F."/>
            <person name="Locali E.C."/>
            <person name="Machado M.A."/>
            <person name="Madeira A.M.B.N."/>
            <person name="Martinez-Rossi N.M."/>
            <person name="Martins E.C."/>
            <person name="Meidanis J."/>
            <person name="Menck C.F.M."/>
            <person name="Miyaki C.Y."/>
            <person name="Moon D.H."/>
            <person name="Moreira L.M."/>
            <person name="Novo M.T.M."/>
            <person name="Okura V.K."/>
            <person name="Oliveira M.C."/>
            <person name="Oliveira V.R."/>
            <person name="Pereira H.A."/>
            <person name="Rossi A."/>
            <person name="Sena J.A.D."/>
            <person name="Silva C."/>
            <person name="de Souza R.F."/>
            <person name="Spinola L.A.F."/>
            <person name="Takita M.A."/>
            <person name="Tamura R.E."/>
            <person name="Teixeira E.C."/>
            <person name="Tezza R.I.D."/>
            <person name="Trindade dos Santos M."/>
            <person name="Truffi D."/>
            <person name="Tsai S.M."/>
            <person name="White F.F."/>
            <person name="Setubal J.C."/>
            <person name="Kitajima J.P."/>
        </authorList>
    </citation>
    <scope>NUCLEOTIDE SEQUENCE [LARGE SCALE GENOMIC DNA]</scope>
    <source>
        <strain>306</strain>
    </source>
</reference>